<evidence type="ECO:0000255" key="1">
    <source>
        <dbReference type="HAMAP-Rule" id="MF_01241"/>
    </source>
</evidence>
<organism>
    <name type="scientific">Leuconostoc citreum (strain KM20)</name>
    <dbReference type="NCBI Taxonomy" id="349519"/>
    <lineage>
        <taxon>Bacteria</taxon>
        <taxon>Bacillati</taxon>
        <taxon>Bacillota</taxon>
        <taxon>Bacilli</taxon>
        <taxon>Lactobacillales</taxon>
        <taxon>Lactobacillaceae</taxon>
        <taxon>Leuconostoc</taxon>
    </lineage>
</organism>
<accession>B1MX39</accession>
<feature type="chain" id="PRO_1000139780" description="Glucosamine-6-phosphate deaminase">
    <location>
        <begin position="1"/>
        <end position="233"/>
    </location>
</feature>
<feature type="active site" description="Proton acceptor; for enolization step" evidence="1">
    <location>
        <position position="62"/>
    </location>
</feature>
<feature type="active site" description="For ring-opening step" evidence="1">
    <location>
        <position position="128"/>
    </location>
</feature>
<feature type="active site" description="Proton acceptor; for ring-opening step" evidence="1">
    <location>
        <position position="130"/>
    </location>
</feature>
<feature type="active site" description="For ring-opening step" evidence="1">
    <location>
        <position position="135"/>
    </location>
</feature>
<comment type="function">
    <text evidence="1">Catalyzes the reversible isomerization-deamination of glucosamine 6-phosphate (GlcN6P) to form fructose 6-phosphate (Fru6P) and ammonium ion.</text>
</comment>
<comment type="catalytic activity">
    <reaction evidence="1">
        <text>alpha-D-glucosamine 6-phosphate + H2O = beta-D-fructose 6-phosphate + NH4(+)</text>
        <dbReference type="Rhea" id="RHEA:12172"/>
        <dbReference type="ChEBI" id="CHEBI:15377"/>
        <dbReference type="ChEBI" id="CHEBI:28938"/>
        <dbReference type="ChEBI" id="CHEBI:57634"/>
        <dbReference type="ChEBI" id="CHEBI:75989"/>
        <dbReference type="EC" id="3.5.99.6"/>
    </reaction>
</comment>
<comment type="pathway">
    <text evidence="1">Amino-sugar metabolism; N-acetylneuraminate degradation; D-fructose 6-phosphate from N-acetylneuraminate: step 5/5.</text>
</comment>
<comment type="similarity">
    <text evidence="1">Belongs to the glucosamine/galactosamine-6-phosphate isomerase family. NagB subfamily.</text>
</comment>
<keyword id="KW-0119">Carbohydrate metabolism</keyword>
<keyword id="KW-0378">Hydrolase</keyword>
<keyword id="KW-1185">Reference proteome</keyword>
<reference key="1">
    <citation type="journal article" date="2008" name="J. Bacteriol.">
        <title>Complete genome sequence of Leuconostoc citreum KM20.</title>
        <authorList>
            <person name="Kim J.F."/>
            <person name="Jeong H."/>
            <person name="Lee J.-S."/>
            <person name="Choi S.-H."/>
            <person name="Ha M."/>
            <person name="Hur C.-G."/>
            <person name="Kim J.-S."/>
            <person name="Lee S."/>
            <person name="Park H.-S."/>
            <person name="Park Y.-H."/>
            <person name="Oh T.K."/>
        </authorList>
    </citation>
    <scope>NUCLEOTIDE SEQUENCE [LARGE SCALE GENOMIC DNA]</scope>
    <source>
        <strain>KM20</strain>
    </source>
</reference>
<protein>
    <recommendedName>
        <fullName evidence="1">Glucosamine-6-phosphate deaminase</fullName>
        <ecNumber evidence="1">3.5.99.6</ecNumber>
    </recommendedName>
    <alternativeName>
        <fullName evidence="1">GlcN6P deaminase</fullName>
        <shortName evidence="1">GNPDA</shortName>
    </alternativeName>
    <alternativeName>
        <fullName evidence="1">Glucosamine-6-phosphate isomerase</fullName>
    </alternativeName>
</protein>
<sequence>MNIIKVNNASQGAARAYDIFAETLTKGATVFGLATGSTPVPLYQRLVESPLDFSQATAINLDEYLGLSGNDPQSYHFFMAQHLFNHKAFKQTFIPDGKNPDRQAATSQYDRIIEENPIDLQLLGLGRNGHIGFNEPGTAFDSKTHIVDLTQSTIDANARFFDHEVDVPTQAISMGIGSVMSAKHILLMAFGAEKADAVAQMISGPITEKLPASVLQQHPNVTVIIDDAAAAKL</sequence>
<name>NAGB_LEUCK</name>
<proteinExistence type="inferred from homology"/>
<gene>
    <name evidence="1" type="primary">nagB</name>
    <name type="ordered locus">LCK_00258</name>
</gene>
<dbReference type="EC" id="3.5.99.6" evidence="1"/>
<dbReference type="EMBL" id="DQ489736">
    <property type="protein sequence ID" value="ACA82091.1"/>
    <property type="molecule type" value="Genomic_DNA"/>
</dbReference>
<dbReference type="RefSeq" id="WP_004901271.1">
    <property type="nucleotide sequence ID" value="NC_010471.1"/>
</dbReference>
<dbReference type="SMR" id="B1MX39"/>
<dbReference type="STRING" id="349519.LCK_00258"/>
<dbReference type="KEGG" id="lci:LCK_00258"/>
<dbReference type="eggNOG" id="COG0363">
    <property type="taxonomic scope" value="Bacteria"/>
</dbReference>
<dbReference type="HOGENOM" id="CLU_049611_1_0_9"/>
<dbReference type="OrthoDB" id="9791139at2"/>
<dbReference type="UniPathway" id="UPA00629">
    <property type="reaction ID" value="UER00684"/>
</dbReference>
<dbReference type="Proteomes" id="UP000002166">
    <property type="component" value="Chromosome"/>
</dbReference>
<dbReference type="GO" id="GO:0005737">
    <property type="term" value="C:cytoplasm"/>
    <property type="evidence" value="ECO:0007669"/>
    <property type="project" value="TreeGrafter"/>
</dbReference>
<dbReference type="GO" id="GO:0004342">
    <property type="term" value="F:glucosamine-6-phosphate deaminase activity"/>
    <property type="evidence" value="ECO:0007669"/>
    <property type="project" value="UniProtKB-UniRule"/>
</dbReference>
<dbReference type="GO" id="GO:0042802">
    <property type="term" value="F:identical protein binding"/>
    <property type="evidence" value="ECO:0007669"/>
    <property type="project" value="TreeGrafter"/>
</dbReference>
<dbReference type="GO" id="GO:0005975">
    <property type="term" value="P:carbohydrate metabolic process"/>
    <property type="evidence" value="ECO:0007669"/>
    <property type="project" value="InterPro"/>
</dbReference>
<dbReference type="GO" id="GO:0006043">
    <property type="term" value="P:glucosamine catabolic process"/>
    <property type="evidence" value="ECO:0007669"/>
    <property type="project" value="TreeGrafter"/>
</dbReference>
<dbReference type="GO" id="GO:0006046">
    <property type="term" value="P:N-acetylglucosamine catabolic process"/>
    <property type="evidence" value="ECO:0007669"/>
    <property type="project" value="TreeGrafter"/>
</dbReference>
<dbReference type="GO" id="GO:0019262">
    <property type="term" value="P:N-acetylneuraminate catabolic process"/>
    <property type="evidence" value="ECO:0007669"/>
    <property type="project" value="UniProtKB-UniRule"/>
</dbReference>
<dbReference type="CDD" id="cd01399">
    <property type="entry name" value="GlcN6P_deaminase"/>
    <property type="match status" value="1"/>
</dbReference>
<dbReference type="FunFam" id="3.40.50.1360:FF:000003">
    <property type="entry name" value="Glucosamine-6-phosphate deaminase"/>
    <property type="match status" value="1"/>
</dbReference>
<dbReference type="Gene3D" id="3.40.50.1360">
    <property type="match status" value="1"/>
</dbReference>
<dbReference type="HAMAP" id="MF_01241">
    <property type="entry name" value="GlcN6P_deamin"/>
    <property type="match status" value="1"/>
</dbReference>
<dbReference type="InterPro" id="IPR006148">
    <property type="entry name" value="Glc/Gal-6P_isomerase"/>
</dbReference>
<dbReference type="InterPro" id="IPR004547">
    <property type="entry name" value="Glucosamine6P_isomerase"/>
</dbReference>
<dbReference type="InterPro" id="IPR018321">
    <property type="entry name" value="Glucosamine6P_isomerase_CS"/>
</dbReference>
<dbReference type="InterPro" id="IPR037171">
    <property type="entry name" value="NagB/RpiA_transferase-like"/>
</dbReference>
<dbReference type="NCBIfam" id="TIGR00502">
    <property type="entry name" value="nagB"/>
    <property type="match status" value="1"/>
</dbReference>
<dbReference type="PANTHER" id="PTHR11280">
    <property type="entry name" value="GLUCOSAMINE-6-PHOSPHATE ISOMERASE"/>
    <property type="match status" value="1"/>
</dbReference>
<dbReference type="PANTHER" id="PTHR11280:SF5">
    <property type="entry name" value="GLUCOSAMINE-6-PHOSPHATE ISOMERASE"/>
    <property type="match status" value="1"/>
</dbReference>
<dbReference type="Pfam" id="PF01182">
    <property type="entry name" value="Glucosamine_iso"/>
    <property type="match status" value="1"/>
</dbReference>
<dbReference type="SUPFAM" id="SSF100950">
    <property type="entry name" value="NagB/RpiA/CoA transferase-like"/>
    <property type="match status" value="1"/>
</dbReference>
<dbReference type="PROSITE" id="PS01161">
    <property type="entry name" value="GLC_GALNAC_ISOMERASE"/>
    <property type="match status" value="1"/>
</dbReference>